<protein>
    <recommendedName>
        <fullName evidence="1">ATP synthase subunit delta</fullName>
    </recommendedName>
    <alternativeName>
        <fullName evidence="1">ATP synthase F(1) sector subunit delta</fullName>
    </alternativeName>
    <alternativeName>
        <fullName evidence="1">F-type ATPase subunit delta</fullName>
        <shortName evidence="1">F-ATPase subunit delta</shortName>
    </alternativeName>
</protein>
<organism>
    <name type="scientific">Acetivibrio thermocellus (strain ATCC 27405 / DSM 1237 / JCM 9322 / NBRC 103400 / NCIMB 10682 / NRRL B-4536 / VPI 7372)</name>
    <name type="common">Clostridium thermocellum</name>
    <dbReference type="NCBI Taxonomy" id="203119"/>
    <lineage>
        <taxon>Bacteria</taxon>
        <taxon>Bacillati</taxon>
        <taxon>Bacillota</taxon>
        <taxon>Clostridia</taxon>
        <taxon>Eubacteriales</taxon>
        <taxon>Oscillospiraceae</taxon>
        <taxon>Acetivibrio</taxon>
    </lineage>
</organism>
<comment type="function">
    <text evidence="1">F(1)F(0) ATP synthase produces ATP from ADP in the presence of a proton or sodium gradient. F-type ATPases consist of two structural domains, F(1) containing the extramembraneous catalytic core and F(0) containing the membrane proton channel, linked together by a central stalk and a peripheral stalk. During catalysis, ATP synthesis in the catalytic domain of F(1) is coupled via a rotary mechanism of the central stalk subunits to proton translocation.</text>
</comment>
<comment type="function">
    <text evidence="1">This protein is part of the stalk that links CF(0) to CF(1). It either transmits conformational changes from CF(0) to CF(1) or is implicated in proton conduction.</text>
</comment>
<comment type="subunit">
    <text evidence="1">F-type ATPases have 2 components, F(1) - the catalytic core - and F(0) - the membrane proton channel. F(1) has five subunits: alpha(3), beta(3), gamma(1), delta(1), epsilon(1). F(0) has three main subunits: a(1), b(2) and c(10-14). The alpha and beta chains form an alternating ring which encloses part of the gamma chain. F(1) is attached to F(0) by a central stalk formed by the gamma and epsilon chains, while a peripheral stalk is formed by the delta and b chains.</text>
</comment>
<comment type="subcellular location">
    <subcellularLocation>
        <location evidence="1">Cell membrane</location>
        <topology evidence="1">Peripheral membrane protein</topology>
    </subcellularLocation>
</comment>
<comment type="similarity">
    <text evidence="1">Belongs to the ATPase delta chain family.</text>
</comment>
<comment type="sequence caution" evidence="2">
    <conflict type="erroneous initiation">
        <sequence resource="EMBL-CDS" id="ABN53805"/>
    </conflict>
</comment>
<sequence length="178" mass="20844">MQLVNTRYAEALIDVTEEKNSTDKVLNNLVQVLKLLEENREFYSFLLDPQIQKESRKEAIIKVFEGRIEQEVVNFLMLLVDKERFENIRGIVEEYFRLADERKNILNMTIISAFPLEDVQINRIKEKYKKLYNKTDVKAKLIIDKSLIGGVKIQIGDKVIDDSIKGRLLCLKEALLQR</sequence>
<reference key="1">
    <citation type="submission" date="2007-02" db="EMBL/GenBank/DDBJ databases">
        <title>Complete sequence of Clostridium thermocellum ATCC 27405.</title>
        <authorList>
            <consortium name="US DOE Joint Genome Institute"/>
            <person name="Copeland A."/>
            <person name="Lucas S."/>
            <person name="Lapidus A."/>
            <person name="Barry K."/>
            <person name="Detter J.C."/>
            <person name="Glavina del Rio T."/>
            <person name="Hammon N."/>
            <person name="Israni S."/>
            <person name="Dalin E."/>
            <person name="Tice H."/>
            <person name="Pitluck S."/>
            <person name="Chertkov O."/>
            <person name="Brettin T."/>
            <person name="Bruce D."/>
            <person name="Han C."/>
            <person name="Tapia R."/>
            <person name="Gilna P."/>
            <person name="Schmutz J."/>
            <person name="Larimer F."/>
            <person name="Land M."/>
            <person name="Hauser L."/>
            <person name="Kyrpides N."/>
            <person name="Mikhailova N."/>
            <person name="Wu J.H.D."/>
            <person name="Newcomb M."/>
            <person name="Richardson P."/>
        </authorList>
    </citation>
    <scope>NUCLEOTIDE SEQUENCE [LARGE SCALE GENOMIC DNA]</scope>
    <source>
        <strain>ATCC 27405 / DSM 1237 / JCM 9322 / NBRC 103400 / NCIMB 10682 / NRRL B-4536 / VPI 7372</strain>
    </source>
</reference>
<feature type="chain" id="PRO_0000370953" description="ATP synthase subunit delta">
    <location>
        <begin position="1"/>
        <end position="178"/>
    </location>
</feature>
<keyword id="KW-0066">ATP synthesis</keyword>
<keyword id="KW-1003">Cell membrane</keyword>
<keyword id="KW-0139">CF(1)</keyword>
<keyword id="KW-0375">Hydrogen ion transport</keyword>
<keyword id="KW-0406">Ion transport</keyword>
<keyword id="KW-0472">Membrane</keyword>
<keyword id="KW-1185">Reference proteome</keyword>
<keyword id="KW-0813">Transport</keyword>
<accession>A3DIM6</accession>
<gene>
    <name evidence="1" type="primary">atpH</name>
    <name type="ordered locus">Cthe_2605</name>
</gene>
<proteinExistence type="inferred from homology"/>
<name>ATPD_ACET2</name>
<evidence type="ECO:0000255" key="1">
    <source>
        <dbReference type="HAMAP-Rule" id="MF_01416"/>
    </source>
</evidence>
<evidence type="ECO:0000305" key="2"/>
<dbReference type="EMBL" id="CP000568">
    <property type="protein sequence ID" value="ABN53805.1"/>
    <property type="status" value="ALT_INIT"/>
    <property type="molecule type" value="Genomic_DNA"/>
</dbReference>
<dbReference type="SMR" id="A3DIM6"/>
<dbReference type="STRING" id="203119.Cthe_2605"/>
<dbReference type="KEGG" id="cth:Cthe_2605"/>
<dbReference type="eggNOG" id="COG0712">
    <property type="taxonomic scope" value="Bacteria"/>
</dbReference>
<dbReference type="HOGENOM" id="CLU_085114_4_2_9"/>
<dbReference type="Proteomes" id="UP000002145">
    <property type="component" value="Chromosome"/>
</dbReference>
<dbReference type="GO" id="GO:0005886">
    <property type="term" value="C:plasma membrane"/>
    <property type="evidence" value="ECO:0007669"/>
    <property type="project" value="UniProtKB-SubCell"/>
</dbReference>
<dbReference type="GO" id="GO:0045259">
    <property type="term" value="C:proton-transporting ATP synthase complex"/>
    <property type="evidence" value="ECO:0007669"/>
    <property type="project" value="UniProtKB-KW"/>
</dbReference>
<dbReference type="GO" id="GO:0046933">
    <property type="term" value="F:proton-transporting ATP synthase activity, rotational mechanism"/>
    <property type="evidence" value="ECO:0007669"/>
    <property type="project" value="UniProtKB-UniRule"/>
</dbReference>
<dbReference type="Gene3D" id="1.10.520.20">
    <property type="entry name" value="N-terminal domain of the delta subunit of the F1F0-ATP synthase"/>
    <property type="match status" value="1"/>
</dbReference>
<dbReference type="HAMAP" id="MF_01416">
    <property type="entry name" value="ATP_synth_delta_bact"/>
    <property type="match status" value="1"/>
</dbReference>
<dbReference type="InterPro" id="IPR026015">
    <property type="entry name" value="ATP_synth_OSCP/delta_N_sf"/>
</dbReference>
<dbReference type="InterPro" id="IPR000711">
    <property type="entry name" value="ATPase_OSCP/dsu"/>
</dbReference>
<dbReference type="NCBIfam" id="TIGR01145">
    <property type="entry name" value="ATP_synt_delta"/>
    <property type="match status" value="1"/>
</dbReference>
<dbReference type="NCBIfam" id="NF004403">
    <property type="entry name" value="PRK05758.2-4"/>
    <property type="match status" value="1"/>
</dbReference>
<dbReference type="PANTHER" id="PTHR11910">
    <property type="entry name" value="ATP SYNTHASE DELTA CHAIN"/>
    <property type="match status" value="1"/>
</dbReference>
<dbReference type="Pfam" id="PF00213">
    <property type="entry name" value="OSCP"/>
    <property type="match status" value="1"/>
</dbReference>
<dbReference type="PRINTS" id="PR00125">
    <property type="entry name" value="ATPASEDELTA"/>
</dbReference>
<dbReference type="SUPFAM" id="SSF47928">
    <property type="entry name" value="N-terminal domain of the delta subunit of the F1F0-ATP synthase"/>
    <property type="match status" value="1"/>
</dbReference>